<sequence length="49" mass="5873">MRVNVTLACTECGDRNYITTKNKRNNPERVEMKKFCSRENKQTLHRETK</sequence>
<keyword id="KW-0687">Ribonucleoprotein</keyword>
<keyword id="KW-0689">Ribosomal protein</keyword>
<comment type="similarity">
    <text evidence="1">Belongs to the bacterial ribosomal protein bL33 family.</text>
</comment>
<evidence type="ECO:0000255" key="1">
    <source>
        <dbReference type="HAMAP-Rule" id="MF_00294"/>
    </source>
</evidence>
<feature type="chain" id="PRO_0000356696" description="Large ribosomal subunit protein bL33B">
    <location>
        <begin position="1"/>
        <end position="49"/>
    </location>
</feature>
<dbReference type="EMBL" id="CP000255">
    <property type="protein sequence ID" value="ABD22749.1"/>
    <property type="molecule type" value="Genomic_DNA"/>
</dbReference>
<dbReference type="SMR" id="Q2FGH2"/>
<dbReference type="KEGG" id="saa:SAUSA300_1511"/>
<dbReference type="HOGENOM" id="CLU_190949_0_2_9"/>
<dbReference type="Proteomes" id="UP000001939">
    <property type="component" value="Chromosome"/>
</dbReference>
<dbReference type="GO" id="GO:0005737">
    <property type="term" value="C:cytoplasm"/>
    <property type="evidence" value="ECO:0007669"/>
    <property type="project" value="UniProtKB-ARBA"/>
</dbReference>
<dbReference type="GO" id="GO:1990904">
    <property type="term" value="C:ribonucleoprotein complex"/>
    <property type="evidence" value="ECO:0007669"/>
    <property type="project" value="UniProtKB-KW"/>
</dbReference>
<dbReference type="GO" id="GO:0005840">
    <property type="term" value="C:ribosome"/>
    <property type="evidence" value="ECO:0007669"/>
    <property type="project" value="UniProtKB-KW"/>
</dbReference>
<dbReference type="GO" id="GO:0003735">
    <property type="term" value="F:structural constituent of ribosome"/>
    <property type="evidence" value="ECO:0007669"/>
    <property type="project" value="InterPro"/>
</dbReference>
<dbReference type="GO" id="GO:0006412">
    <property type="term" value="P:translation"/>
    <property type="evidence" value="ECO:0007669"/>
    <property type="project" value="UniProtKB-UniRule"/>
</dbReference>
<dbReference type="Gene3D" id="2.20.28.120">
    <property type="entry name" value="Ribosomal protein L33"/>
    <property type="match status" value="1"/>
</dbReference>
<dbReference type="HAMAP" id="MF_00294">
    <property type="entry name" value="Ribosomal_bL33"/>
    <property type="match status" value="1"/>
</dbReference>
<dbReference type="InterPro" id="IPR001705">
    <property type="entry name" value="Ribosomal_bL33"/>
</dbReference>
<dbReference type="InterPro" id="IPR018264">
    <property type="entry name" value="Ribosomal_bL33_CS"/>
</dbReference>
<dbReference type="InterPro" id="IPR038584">
    <property type="entry name" value="Ribosomal_bL33_sf"/>
</dbReference>
<dbReference type="InterPro" id="IPR011332">
    <property type="entry name" value="Ribosomal_zn-bd"/>
</dbReference>
<dbReference type="NCBIfam" id="NF001764">
    <property type="entry name" value="PRK00504.1"/>
    <property type="match status" value="1"/>
</dbReference>
<dbReference type="NCBIfam" id="NF001860">
    <property type="entry name" value="PRK00595.1"/>
    <property type="match status" value="1"/>
</dbReference>
<dbReference type="NCBIfam" id="TIGR01023">
    <property type="entry name" value="rpmG_bact"/>
    <property type="match status" value="1"/>
</dbReference>
<dbReference type="PANTHER" id="PTHR43168">
    <property type="entry name" value="50S RIBOSOMAL PROTEIN L33, CHLOROPLASTIC"/>
    <property type="match status" value="1"/>
</dbReference>
<dbReference type="PANTHER" id="PTHR43168:SF2">
    <property type="entry name" value="LARGE RIBOSOMAL SUBUNIT PROTEIN BL33C"/>
    <property type="match status" value="1"/>
</dbReference>
<dbReference type="Pfam" id="PF00471">
    <property type="entry name" value="Ribosomal_L33"/>
    <property type="match status" value="1"/>
</dbReference>
<dbReference type="SUPFAM" id="SSF57829">
    <property type="entry name" value="Zn-binding ribosomal proteins"/>
    <property type="match status" value="1"/>
</dbReference>
<dbReference type="PROSITE" id="PS00582">
    <property type="entry name" value="RIBOSOMAL_L33"/>
    <property type="match status" value="1"/>
</dbReference>
<name>RL332_STAA3</name>
<proteinExistence type="inferred from homology"/>
<reference key="1">
    <citation type="journal article" date="2006" name="Lancet">
        <title>Complete genome sequence of USA300, an epidemic clone of community-acquired meticillin-resistant Staphylococcus aureus.</title>
        <authorList>
            <person name="Diep B.A."/>
            <person name="Gill S.R."/>
            <person name="Chang R.F."/>
            <person name="Phan T.H."/>
            <person name="Chen J.H."/>
            <person name="Davidson M.G."/>
            <person name="Lin F."/>
            <person name="Lin J."/>
            <person name="Carleton H.A."/>
            <person name="Mongodin E.F."/>
            <person name="Sensabaugh G.F."/>
            <person name="Perdreau-Remington F."/>
        </authorList>
    </citation>
    <scope>NUCLEOTIDE SEQUENCE [LARGE SCALE GENOMIC DNA]</scope>
    <source>
        <strain>USA300</strain>
    </source>
</reference>
<protein>
    <recommendedName>
        <fullName evidence="1">Large ribosomal subunit protein bL33B</fullName>
    </recommendedName>
    <alternativeName>
        <fullName evidence="1">50S ribosomal protein L33 2</fullName>
    </alternativeName>
</protein>
<accession>Q2FGH2</accession>
<organism>
    <name type="scientific">Staphylococcus aureus (strain USA300)</name>
    <dbReference type="NCBI Taxonomy" id="367830"/>
    <lineage>
        <taxon>Bacteria</taxon>
        <taxon>Bacillati</taxon>
        <taxon>Bacillota</taxon>
        <taxon>Bacilli</taxon>
        <taxon>Bacillales</taxon>
        <taxon>Staphylococcaceae</taxon>
        <taxon>Staphylococcus</taxon>
    </lineage>
</organism>
<gene>
    <name evidence="1" type="primary">rpmG2</name>
    <name type="ordered locus">SAUSA300_1511</name>
</gene>